<accession>Q8VE92</accession>
<name>RBM4B_MOUSE</name>
<sequence>MVKLFIGNLPREATEQEIRSLFEQYGKVLECDIIKNYGFVHIEDKTAAEDAIRNLHHYKLHGVNINVEASKNKSKASTKLHVGNISPTCTNQELRAKFEEYGPVIECDIVKDYAFVHMERAEDAVEAIRGLDNTEFQGKRMHVQLSTSRLRTAPGMGDQSGCYRCGKEGHWSKECPVDRTGRVADFTEQYNEQYGAVRTPYTMGYGESMYYNDAYGALDYYKRYRVRSYEAVAAAAAASAYNYAEQTMSHLPQVQSSAVPSHLNSTSVDPYDRHLLQNSGSAATSAAMAAAASSSYYGRDRSPLRRNAAVLPAVGEGYGYGPESEMSQASAATRNSLYDMARYEREQYVDRTRYSAF</sequence>
<dbReference type="EMBL" id="BC019488">
    <property type="protein sequence ID" value="AAH19488.1"/>
    <property type="molecule type" value="mRNA"/>
</dbReference>
<dbReference type="CCDS" id="CCDS29435.1"/>
<dbReference type="RefSeq" id="NP_079993.2">
    <property type="nucleotide sequence ID" value="NM_025717.3"/>
</dbReference>
<dbReference type="RefSeq" id="XP_006531886.1">
    <property type="nucleotide sequence ID" value="XM_006531823.3"/>
</dbReference>
<dbReference type="RefSeq" id="XP_006531887.1">
    <property type="nucleotide sequence ID" value="XM_006531824.5"/>
</dbReference>
<dbReference type="RefSeq" id="XP_006531888.1">
    <property type="nucleotide sequence ID" value="XM_006531825.5"/>
</dbReference>
<dbReference type="RefSeq" id="XP_006531889.1">
    <property type="nucleotide sequence ID" value="XM_006531826.4"/>
</dbReference>
<dbReference type="RefSeq" id="XP_030106890.1">
    <property type="nucleotide sequence ID" value="XM_030251030.2"/>
</dbReference>
<dbReference type="SMR" id="Q8VE92"/>
<dbReference type="BioGRID" id="211657">
    <property type="interactions" value="2"/>
</dbReference>
<dbReference type="FunCoup" id="Q8VE92">
    <property type="interactions" value="3422"/>
</dbReference>
<dbReference type="IntAct" id="Q8VE92">
    <property type="interactions" value="1"/>
</dbReference>
<dbReference type="MINT" id="Q8VE92"/>
<dbReference type="STRING" id="10090.ENSMUSP00000038256"/>
<dbReference type="iPTMnet" id="Q8VE92"/>
<dbReference type="PhosphoSitePlus" id="Q8VE92"/>
<dbReference type="SwissPalm" id="Q8VE92"/>
<dbReference type="jPOST" id="Q8VE92"/>
<dbReference type="PaxDb" id="10090-ENSMUSP00000038256"/>
<dbReference type="PeptideAtlas" id="Q8VE92"/>
<dbReference type="ProteomicsDB" id="255006"/>
<dbReference type="Pumba" id="Q8VE92"/>
<dbReference type="DNASU" id="66704"/>
<dbReference type="Ensembl" id="ENSMUST00000036744.8">
    <property type="protein sequence ID" value="ENSMUSP00000038256.7"/>
    <property type="gene ID" value="ENSMUSG00000033760.18"/>
</dbReference>
<dbReference type="Ensembl" id="ENSMUST00000182821.8">
    <property type="protein sequence ID" value="ENSMUSP00000157674.2"/>
    <property type="gene ID" value="ENSMUSG00000033760.18"/>
</dbReference>
<dbReference type="Ensembl" id="ENSMUST00000235278.2">
    <property type="protein sequence ID" value="ENSMUSP00000157500.2"/>
    <property type="gene ID" value="ENSMUSG00000033760.18"/>
</dbReference>
<dbReference type="GeneID" id="66704"/>
<dbReference type="KEGG" id="mmu:66704"/>
<dbReference type="UCSC" id="uc008gar.1">
    <property type="organism name" value="mouse"/>
</dbReference>
<dbReference type="AGR" id="MGI:1913954"/>
<dbReference type="CTD" id="83759"/>
<dbReference type="MGI" id="MGI:1913954">
    <property type="gene designation" value="Rbm4b"/>
</dbReference>
<dbReference type="VEuPathDB" id="HostDB:ENSMUSG00000033760"/>
<dbReference type="eggNOG" id="KOG0109">
    <property type="taxonomic scope" value="Eukaryota"/>
</dbReference>
<dbReference type="GeneTree" id="ENSGT00940000154421"/>
<dbReference type="HOGENOM" id="CLU_045263_0_0_1"/>
<dbReference type="InParanoid" id="Q8VE92"/>
<dbReference type="OMA" id="HTGCYVC"/>
<dbReference type="OrthoDB" id="79941at2759"/>
<dbReference type="PhylomeDB" id="Q8VE92"/>
<dbReference type="TreeFam" id="TF320661"/>
<dbReference type="BioGRID-ORCS" id="66704">
    <property type="hits" value="2 hits in 76 CRISPR screens"/>
</dbReference>
<dbReference type="PRO" id="PR:Q8VE92"/>
<dbReference type="Proteomes" id="UP000000589">
    <property type="component" value="Chromosome 19"/>
</dbReference>
<dbReference type="RNAct" id="Q8VE92">
    <property type="molecule type" value="protein"/>
</dbReference>
<dbReference type="Bgee" id="ENSMUSG00000033760">
    <property type="expression patterns" value="Expressed in seminiferous tubule of testis and 167 other cell types or tissues"/>
</dbReference>
<dbReference type="ExpressionAtlas" id="Q8VE92">
    <property type="expression patterns" value="baseline and differential"/>
</dbReference>
<dbReference type="GO" id="GO:0005829">
    <property type="term" value="C:cytosol"/>
    <property type="evidence" value="ECO:0007669"/>
    <property type="project" value="Ensembl"/>
</dbReference>
<dbReference type="GO" id="GO:0005730">
    <property type="term" value="C:nucleolus"/>
    <property type="evidence" value="ECO:0007669"/>
    <property type="project" value="UniProtKB-SubCell"/>
</dbReference>
<dbReference type="GO" id="GO:0005654">
    <property type="term" value="C:nucleoplasm"/>
    <property type="evidence" value="ECO:0007669"/>
    <property type="project" value="Ensembl"/>
</dbReference>
<dbReference type="GO" id="GO:0032991">
    <property type="term" value="C:protein-containing complex"/>
    <property type="evidence" value="ECO:0007669"/>
    <property type="project" value="Ensembl"/>
</dbReference>
<dbReference type="GO" id="GO:0003723">
    <property type="term" value="F:RNA binding"/>
    <property type="evidence" value="ECO:0007669"/>
    <property type="project" value="UniProtKB-KW"/>
</dbReference>
<dbReference type="GO" id="GO:0008270">
    <property type="term" value="F:zinc ion binding"/>
    <property type="evidence" value="ECO:0007669"/>
    <property type="project" value="UniProtKB-KW"/>
</dbReference>
<dbReference type="GO" id="GO:0032922">
    <property type="term" value="P:circadian regulation of gene expression"/>
    <property type="evidence" value="ECO:0000314"/>
    <property type="project" value="UniProtKB"/>
</dbReference>
<dbReference type="GO" id="GO:0007623">
    <property type="term" value="P:circadian rhythm"/>
    <property type="evidence" value="ECO:0000314"/>
    <property type="project" value="UniProtKB"/>
</dbReference>
<dbReference type="GO" id="GO:0043153">
    <property type="term" value="P:entrainment of circadian clock by photoperiod"/>
    <property type="evidence" value="ECO:0000314"/>
    <property type="project" value="UniProtKB"/>
</dbReference>
<dbReference type="GO" id="GO:0006397">
    <property type="term" value="P:mRNA processing"/>
    <property type="evidence" value="ECO:0007669"/>
    <property type="project" value="UniProtKB-KW"/>
</dbReference>
<dbReference type="GO" id="GO:0010628">
    <property type="term" value="P:positive regulation of gene expression"/>
    <property type="evidence" value="ECO:0000314"/>
    <property type="project" value="MGI"/>
</dbReference>
<dbReference type="GO" id="GO:0006417">
    <property type="term" value="P:regulation of translation"/>
    <property type="evidence" value="ECO:0000314"/>
    <property type="project" value="UniProtKB"/>
</dbReference>
<dbReference type="GO" id="GO:0008380">
    <property type="term" value="P:RNA splicing"/>
    <property type="evidence" value="ECO:0007669"/>
    <property type="project" value="UniProtKB-KW"/>
</dbReference>
<dbReference type="CDD" id="cd12606">
    <property type="entry name" value="RRM1_RBM4"/>
    <property type="match status" value="1"/>
</dbReference>
<dbReference type="CDD" id="cd12607">
    <property type="entry name" value="RRM2_RBM4"/>
    <property type="match status" value="1"/>
</dbReference>
<dbReference type="FunFam" id="3.30.70.330:FF:000058">
    <property type="entry name" value="RNA-binding motif protein 4"/>
    <property type="match status" value="1"/>
</dbReference>
<dbReference type="FunFam" id="3.30.70.330:FF:000085">
    <property type="entry name" value="RNA-binding protein 4 isoform X1"/>
    <property type="match status" value="1"/>
</dbReference>
<dbReference type="FunFam" id="4.10.60.10:FF:000015">
    <property type="entry name" value="RNA-binding protein 4B isoform X1"/>
    <property type="match status" value="1"/>
</dbReference>
<dbReference type="Gene3D" id="3.30.70.330">
    <property type="match status" value="2"/>
</dbReference>
<dbReference type="Gene3D" id="4.10.60.10">
    <property type="entry name" value="Zinc finger, CCHC-type"/>
    <property type="match status" value="1"/>
</dbReference>
<dbReference type="InterPro" id="IPR050502">
    <property type="entry name" value="Euk_RNA-bind_prot"/>
</dbReference>
<dbReference type="InterPro" id="IPR012677">
    <property type="entry name" value="Nucleotide-bd_a/b_plait_sf"/>
</dbReference>
<dbReference type="InterPro" id="IPR035979">
    <property type="entry name" value="RBD_domain_sf"/>
</dbReference>
<dbReference type="InterPro" id="IPR034897">
    <property type="entry name" value="RBM4_RRM1"/>
</dbReference>
<dbReference type="InterPro" id="IPR034898">
    <property type="entry name" value="RBM4_RRM2"/>
</dbReference>
<dbReference type="InterPro" id="IPR000504">
    <property type="entry name" value="RRM_dom"/>
</dbReference>
<dbReference type="InterPro" id="IPR001878">
    <property type="entry name" value="Znf_CCHC"/>
</dbReference>
<dbReference type="PANTHER" id="PTHR48025:SF26">
    <property type="entry name" value="HETEROGENEOUS NUCLEAR RIBONUCLEOPROTEIN M-RELATED"/>
    <property type="match status" value="1"/>
</dbReference>
<dbReference type="PANTHER" id="PTHR48025">
    <property type="entry name" value="OS02G0815200 PROTEIN"/>
    <property type="match status" value="1"/>
</dbReference>
<dbReference type="Pfam" id="PF00076">
    <property type="entry name" value="RRM_1"/>
    <property type="match status" value="2"/>
</dbReference>
<dbReference type="Pfam" id="PF00098">
    <property type="entry name" value="zf-CCHC"/>
    <property type="match status" value="1"/>
</dbReference>
<dbReference type="SMART" id="SM00360">
    <property type="entry name" value="RRM"/>
    <property type="match status" value="2"/>
</dbReference>
<dbReference type="SMART" id="SM00343">
    <property type="entry name" value="ZnF_C2HC"/>
    <property type="match status" value="1"/>
</dbReference>
<dbReference type="SUPFAM" id="SSF54928">
    <property type="entry name" value="RNA-binding domain, RBD"/>
    <property type="match status" value="2"/>
</dbReference>
<dbReference type="PROSITE" id="PS50102">
    <property type="entry name" value="RRM"/>
    <property type="match status" value="2"/>
</dbReference>
<dbReference type="PROSITE" id="PS50158">
    <property type="entry name" value="ZF_CCHC"/>
    <property type="match status" value="1"/>
</dbReference>
<proteinExistence type="evidence at protein level"/>
<feature type="chain" id="PRO_0000081788" description="RNA-binding protein 4B">
    <location>
        <begin position="1"/>
        <end position="357"/>
    </location>
</feature>
<feature type="domain" description="RRM 1" evidence="3">
    <location>
        <begin position="2"/>
        <end position="72"/>
    </location>
</feature>
<feature type="domain" description="RRM 2" evidence="3">
    <location>
        <begin position="78"/>
        <end position="148"/>
    </location>
</feature>
<feature type="zinc finger region" description="CCHC-type" evidence="2">
    <location>
        <begin position="160"/>
        <end position="177"/>
    </location>
</feature>
<feature type="region of interest" description="Interaction with TNPO3" evidence="1">
    <location>
        <begin position="196"/>
        <end position="357"/>
    </location>
</feature>
<keyword id="KW-0010">Activator</keyword>
<keyword id="KW-0479">Metal-binding</keyword>
<keyword id="KW-0507">mRNA processing</keyword>
<keyword id="KW-0508">mRNA splicing</keyword>
<keyword id="KW-0539">Nucleus</keyword>
<keyword id="KW-1185">Reference proteome</keyword>
<keyword id="KW-0677">Repeat</keyword>
<keyword id="KW-0694">RNA-binding</keyword>
<keyword id="KW-0862">Zinc</keyword>
<keyword id="KW-0863">Zinc-finger</keyword>
<reference key="1">
    <citation type="journal article" date="2004" name="Genome Res.">
        <title>The status, quality, and expansion of the NIH full-length cDNA project: the Mammalian Gene Collection (MGC).</title>
        <authorList>
            <consortium name="The MGC Project Team"/>
        </authorList>
    </citation>
    <scope>NUCLEOTIDE SEQUENCE [LARGE SCALE MRNA]</scope>
    <source>
        <strain>FVB/N</strain>
        <tissue>Mammary tumor</tissue>
    </source>
</reference>
<reference key="2">
    <citation type="journal article" date="2007" name="Proc. Natl. Acad. Sci. U.S.A.">
        <title>LARK activates posttranscriptional expression of an essential mammalian clock protein, PERIOD1.</title>
        <authorList>
            <person name="Kojima S."/>
            <person name="Matsumoto K."/>
            <person name="Hirose M."/>
            <person name="Shimada M."/>
            <person name="Nagano M."/>
            <person name="Shigeyoshi Y."/>
            <person name="Hoshino S."/>
            <person name="Ui-Tei K."/>
            <person name="Saigo K."/>
            <person name="Green C.B."/>
            <person name="Sakaki Y."/>
            <person name="Tei H."/>
        </authorList>
    </citation>
    <scope>FUNCTION</scope>
    <scope>INDUCTION</scope>
    <scope>TISSUE SPECIFICITY</scope>
</reference>
<reference key="3">
    <citation type="journal article" date="2010" name="Cell">
        <title>A tissue-specific atlas of mouse protein phosphorylation and expression.</title>
        <authorList>
            <person name="Huttlin E.L."/>
            <person name="Jedrychowski M.P."/>
            <person name="Elias J.E."/>
            <person name="Goswami T."/>
            <person name="Rad R."/>
            <person name="Beausoleil S.A."/>
            <person name="Villen J."/>
            <person name="Haas W."/>
            <person name="Sowa M.E."/>
            <person name="Gygi S.P."/>
        </authorList>
    </citation>
    <scope>IDENTIFICATION BY MASS SPECTROMETRY [LARGE SCALE ANALYSIS]</scope>
    <source>
        <tissue>Testis</tissue>
    </source>
</reference>
<protein>
    <recommendedName>
        <fullName>RNA-binding protein 4B</fullName>
    </recommendedName>
    <alternativeName>
        <fullName>RNA-binding motif protein 30</fullName>
    </alternativeName>
    <alternativeName>
        <fullName>RNA-binding motif protein 4B</fullName>
    </alternativeName>
    <alternativeName>
        <fullName>RNA-binding protein 30</fullName>
    </alternativeName>
</protein>
<evidence type="ECO:0000250" key="1"/>
<evidence type="ECO:0000255" key="2">
    <source>
        <dbReference type="PROSITE-ProRule" id="PRU00047"/>
    </source>
</evidence>
<evidence type="ECO:0000255" key="3">
    <source>
        <dbReference type="PROSITE-ProRule" id="PRU00176"/>
    </source>
</evidence>
<evidence type="ECO:0000269" key="4">
    <source>
    </source>
</evidence>
<comment type="function">
    <text evidence="4">Required for the translational activation of PER1 mRNA in response to circadian clock. Binds directly to the 3'-UTR of the PER1 mRNA.</text>
</comment>
<comment type="subunit">
    <text evidence="1">Interacts with TNPO3, which may mediate nuclear import of the protein.</text>
</comment>
<comment type="subcellular location">
    <subcellularLocation>
        <location evidence="1">Nucleus</location>
        <location evidence="1">Nucleolus</location>
    </subcellularLocation>
</comment>
<comment type="tissue specificity">
    <text evidence="4">Expressed in the suprachiasmatic nucleus (SCN) (at protein level). Expressed in the suprachiasmatic nucleus (SCN).</text>
</comment>
<comment type="induction">
    <text evidence="4">Accumulates according to a circadian rhythm in the SCN.</text>
</comment>
<gene>
    <name type="primary">Rbm4b</name>
    <name type="synonym">Rbm30</name>
</gene>
<organism>
    <name type="scientific">Mus musculus</name>
    <name type="common">Mouse</name>
    <dbReference type="NCBI Taxonomy" id="10090"/>
    <lineage>
        <taxon>Eukaryota</taxon>
        <taxon>Metazoa</taxon>
        <taxon>Chordata</taxon>
        <taxon>Craniata</taxon>
        <taxon>Vertebrata</taxon>
        <taxon>Euteleostomi</taxon>
        <taxon>Mammalia</taxon>
        <taxon>Eutheria</taxon>
        <taxon>Euarchontoglires</taxon>
        <taxon>Glires</taxon>
        <taxon>Rodentia</taxon>
        <taxon>Myomorpha</taxon>
        <taxon>Muroidea</taxon>
        <taxon>Muridae</taxon>
        <taxon>Murinae</taxon>
        <taxon>Mus</taxon>
        <taxon>Mus</taxon>
    </lineage>
</organism>